<protein>
    <recommendedName>
        <fullName evidence="1">Ribonuclease Y</fullName>
        <shortName evidence="1">RNase Y</shortName>
        <ecNumber evidence="1">3.1.-.-</ecNumber>
    </recommendedName>
</protein>
<sequence>MITTVIIAIVCFAVGGGLSYMLFRYGLKSKYDIIIKEAQTEAEVIKKNKLLEVKEKFLNKKADLEKEVALRNQKIQQAENKLKQRELMLNQKQEEVQRKRTEAEAIKENLEAQIVIIDKKKDELDKLQMQEREKLEALSGLSAEEAKERLIESLKEEAKTQAASYINDIMDDAKLTANKEAKRIVIQSIQRVATETAIENSVTVFHIESDEIKGRIIGREGRNIRALEAATGVEIVVDDTPEAIVLSAFDPVRREIARLALHQLVTDGRIHPARIEEVVAKVRKQVEEEIIETGKRTTIDLGIHGLHPELIRIIGKMKYRSSYGQNLLQHARETANLCAVMASELGLNPKKAKRAGLLHDIGKVPDEEPELPHALLGMKIAEKYKEKPDICNAIGAHHDETEMTSLLAPIVQVCDAISGARPGARREIVEAYIKRLNDLEQLAMSYPGVTKTYAIQAGRELRVIVGADKIDDKQTESLSGEIAKKIQDEMTYPGQVKITVIRETRAVSFAK</sequence>
<feature type="chain" id="PRO_0000344826" description="Ribonuclease Y">
    <location>
        <begin position="1"/>
        <end position="511"/>
    </location>
</feature>
<feature type="transmembrane region" description="Helical" evidence="1">
    <location>
        <begin position="2"/>
        <end position="22"/>
    </location>
</feature>
<feature type="domain" description="KH" evidence="1">
    <location>
        <begin position="201"/>
        <end position="261"/>
    </location>
</feature>
<feature type="domain" description="HD" evidence="2">
    <location>
        <begin position="327"/>
        <end position="420"/>
    </location>
</feature>
<organism>
    <name type="scientific">Phocaeicola vulgatus (strain ATCC 8482 / DSM 1447 / JCM 5826 / CCUG 4940 / NBRC 14291 / NCTC 11154)</name>
    <name type="common">Bacteroides vulgatus</name>
    <dbReference type="NCBI Taxonomy" id="435590"/>
    <lineage>
        <taxon>Bacteria</taxon>
        <taxon>Pseudomonadati</taxon>
        <taxon>Bacteroidota</taxon>
        <taxon>Bacteroidia</taxon>
        <taxon>Bacteroidales</taxon>
        <taxon>Bacteroidaceae</taxon>
        <taxon>Phocaeicola</taxon>
    </lineage>
</organism>
<evidence type="ECO:0000255" key="1">
    <source>
        <dbReference type="HAMAP-Rule" id="MF_00335"/>
    </source>
</evidence>
<evidence type="ECO:0000255" key="2">
    <source>
        <dbReference type="PROSITE-ProRule" id="PRU01175"/>
    </source>
</evidence>
<keyword id="KW-1003">Cell membrane</keyword>
<keyword id="KW-0255">Endonuclease</keyword>
<keyword id="KW-0378">Hydrolase</keyword>
<keyword id="KW-0472">Membrane</keyword>
<keyword id="KW-0540">Nuclease</keyword>
<keyword id="KW-0694">RNA-binding</keyword>
<keyword id="KW-0812">Transmembrane</keyword>
<keyword id="KW-1133">Transmembrane helix</keyword>
<gene>
    <name evidence="1" type="primary">rny</name>
    <name type="ordered locus">BVU_2078</name>
</gene>
<name>RNY_PHOV8</name>
<reference key="1">
    <citation type="journal article" date="2007" name="PLoS Biol.">
        <title>Evolution of symbiotic bacteria in the distal human intestine.</title>
        <authorList>
            <person name="Xu J."/>
            <person name="Mahowald M.A."/>
            <person name="Ley R.E."/>
            <person name="Lozupone C.A."/>
            <person name="Hamady M."/>
            <person name="Martens E.C."/>
            <person name="Henrissat B."/>
            <person name="Coutinho P.M."/>
            <person name="Minx P."/>
            <person name="Latreille P."/>
            <person name="Cordum H."/>
            <person name="Van Brunt A."/>
            <person name="Kim K."/>
            <person name="Fulton R.S."/>
            <person name="Fulton L.A."/>
            <person name="Clifton S.W."/>
            <person name="Wilson R.K."/>
            <person name="Knight R.D."/>
            <person name="Gordon J.I."/>
        </authorList>
    </citation>
    <scope>NUCLEOTIDE SEQUENCE [LARGE SCALE GENOMIC DNA]</scope>
    <source>
        <strain>ATCC 8482 / DSM 1447 / JCM 5826 / CCUG 4940 / NBRC 14291 / NCTC 11154</strain>
    </source>
</reference>
<accession>A6L227</accession>
<comment type="function">
    <text evidence="1">Endoribonuclease that initiates mRNA decay.</text>
</comment>
<comment type="subcellular location">
    <subcellularLocation>
        <location evidence="1">Cell membrane</location>
        <topology evidence="1">Single-pass membrane protein</topology>
    </subcellularLocation>
</comment>
<comment type="similarity">
    <text evidence="1">Belongs to the RNase Y family.</text>
</comment>
<proteinExistence type="inferred from homology"/>
<dbReference type="EC" id="3.1.-.-" evidence="1"/>
<dbReference type="EMBL" id="CP000139">
    <property type="protein sequence ID" value="ABR39741.1"/>
    <property type="molecule type" value="Genomic_DNA"/>
</dbReference>
<dbReference type="RefSeq" id="WP_005848820.1">
    <property type="nucleotide sequence ID" value="NZ_JANSWM010000089.1"/>
</dbReference>
<dbReference type="SMR" id="A6L227"/>
<dbReference type="STRING" id="435590.BVU_2078"/>
<dbReference type="PaxDb" id="435590-BVU_2078"/>
<dbReference type="DNASU" id="5303042"/>
<dbReference type="GeneID" id="93445869"/>
<dbReference type="KEGG" id="bvu:BVU_2078"/>
<dbReference type="eggNOG" id="COG1418">
    <property type="taxonomic scope" value="Bacteria"/>
</dbReference>
<dbReference type="HOGENOM" id="CLU_028328_1_0_10"/>
<dbReference type="BioCyc" id="BVUL435590:G1G59-2170-MONOMER"/>
<dbReference type="Proteomes" id="UP000002861">
    <property type="component" value="Chromosome"/>
</dbReference>
<dbReference type="GO" id="GO:0005886">
    <property type="term" value="C:plasma membrane"/>
    <property type="evidence" value="ECO:0007669"/>
    <property type="project" value="UniProtKB-SubCell"/>
</dbReference>
<dbReference type="GO" id="GO:0003723">
    <property type="term" value="F:RNA binding"/>
    <property type="evidence" value="ECO:0007669"/>
    <property type="project" value="UniProtKB-UniRule"/>
</dbReference>
<dbReference type="GO" id="GO:0004521">
    <property type="term" value="F:RNA endonuclease activity"/>
    <property type="evidence" value="ECO:0007669"/>
    <property type="project" value="UniProtKB-UniRule"/>
</dbReference>
<dbReference type="GO" id="GO:0006402">
    <property type="term" value="P:mRNA catabolic process"/>
    <property type="evidence" value="ECO:0007669"/>
    <property type="project" value="UniProtKB-UniRule"/>
</dbReference>
<dbReference type="CDD" id="cd00077">
    <property type="entry name" value="HDc"/>
    <property type="match status" value="1"/>
</dbReference>
<dbReference type="CDD" id="cd22431">
    <property type="entry name" value="KH-I_RNaseY"/>
    <property type="match status" value="1"/>
</dbReference>
<dbReference type="FunFam" id="1.10.3210.10:FF:000013">
    <property type="entry name" value="Ribonuclease Y"/>
    <property type="match status" value="1"/>
</dbReference>
<dbReference type="Gene3D" id="1.10.3210.10">
    <property type="entry name" value="Hypothetical protein af1432"/>
    <property type="match status" value="1"/>
</dbReference>
<dbReference type="Gene3D" id="3.30.1370.10">
    <property type="entry name" value="K Homology domain, type 1"/>
    <property type="match status" value="1"/>
</dbReference>
<dbReference type="HAMAP" id="MF_00335">
    <property type="entry name" value="RNase_Y"/>
    <property type="match status" value="1"/>
</dbReference>
<dbReference type="InterPro" id="IPR003607">
    <property type="entry name" value="HD/PDEase_dom"/>
</dbReference>
<dbReference type="InterPro" id="IPR006674">
    <property type="entry name" value="HD_domain"/>
</dbReference>
<dbReference type="InterPro" id="IPR006675">
    <property type="entry name" value="HDIG_dom"/>
</dbReference>
<dbReference type="InterPro" id="IPR004087">
    <property type="entry name" value="KH_dom"/>
</dbReference>
<dbReference type="InterPro" id="IPR004088">
    <property type="entry name" value="KH_dom_type_1"/>
</dbReference>
<dbReference type="InterPro" id="IPR036612">
    <property type="entry name" value="KH_dom_type_1_sf"/>
</dbReference>
<dbReference type="InterPro" id="IPR017705">
    <property type="entry name" value="Ribonuclease_Y"/>
</dbReference>
<dbReference type="InterPro" id="IPR022711">
    <property type="entry name" value="RNase_Y_N"/>
</dbReference>
<dbReference type="NCBIfam" id="TIGR00277">
    <property type="entry name" value="HDIG"/>
    <property type="match status" value="1"/>
</dbReference>
<dbReference type="NCBIfam" id="TIGR03319">
    <property type="entry name" value="RNase_Y"/>
    <property type="match status" value="1"/>
</dbReference>
<dbReference type="PANTHER" id="PTHR12826">
    <property type="entry name" value="RIBONUCLEASE Y"/>
    <property type="match status" value="1"/>
</dbReference>
<dbReference type="PANTHER" id="PTHR12826:SF15">
    <property type="entry name" value="RIBONUCLEASE Y"/>
    <property type="match status" value="1"/>
</dbReference>
<dbReference type="Pfam" id="PF01966">
    <property type="entry name" value="HD"/>
    <property type="match status" value="1"/>
</dbReference>
<dbReference type="Pfam" id="PF00013">
    <property type="entry name" value="KH_1"/>
    <property type="match status" value="1"/>
</dbReference>
<dbReference type="Pfam" id="PF12072">
    <property type="entry name" value="RNase_Y_N"/>
    <property type="match status" value="1"/>
</dbReference>
<dbReference type="SMART" id="SM00471">
    <property type="entry name" value="HDc"/>
    <property type="match status" value="1"/>
</dbReference>
<dbReference type="SMART" id="SM00322">
    <property type="entry name" value="KH"/>
    <property type="match status" value="1"/>
</dbReference>
<dbReference type="SUPFAM" id="SSF54791">
    <property type="entry name" value="Eukaryotic type KH-domain (KH-domain type I)"/>
    <property type="match status" value="1"/>
</dbReference>
<dbReference type="SUPFAM" id="SSF109604">
    <property type="entry name" value="HD-domain/PDEase-like"/>
    <property type="match status" value="1"/>
</dbReference>
<dbReference type="PROSITE" id="PS51831">
    <property type="entry name" value="HD"/>
    <property type="match status" value="1"/>
</dbReference>
<dbReference type="PROSITE" id="PS50084">
    <property type="entry name" value="KH_TYPE_1"/>
    <property type="match status" value="1"/>
</dbReference>